<organism>
    <name type="scientific">Pseudomonas syringae pv. syringae (strain B728a)</name>
    <dbReference type="NCBI Taxonomy" id="205918"/>
    <lineage>
        <taxon>Bacteria</taxon>
        <taxon>Pseudomonadati</taxon>
        <taxon>Pseudomonadota</taxon>
        <taxon>Gammaproteobacteria</taxon>
        <taxon>Pseudomonadales</taxon>
        <taxon>Pseudomonadaceae</taxon>
        <taxon>Pseudomonas</taxon>
        <taxon>Pseudomonas syringae</taxon>
    </lineage>
</organism>
<reference key="1">
    <citation type="submission" date="1998-09" db="EMBL/GenBank/DDBJ databases">
        <title>A transposon insertion in the ftsK/spoIIIE gene impairs in planta growth and lesion forming abilities in Pseudomonas syringae pv. syringae B728a.</title>
        <authorList>
            <person name="Kisncherf T.G."/>
            <person name="Hirano S.S."/>
            <person name="Willis D.K."/>
        </authorList>
    </citation>
    <scope>NUCLEOTIDE SEQUENCE [GENOMIC DNA]</scope>
</reference>
<reference key="2">
    <citation type="journal article" date="2005" name="Proc. Natl. Acad. Sci. U.S.A.">
        <title>Comparison of the complete genome sequences of Pseudomonas syringae pv. syringae B728a and pv. tomato DC3000.</title>
        <authorList>
            <person name="Feil H."/>
            <person name="Feil W.S."/>
            <person name="Chain P."/>
            <person name="Larimer F."/>
            <person name="Dibartolo G."/>
            <person name="Copeland A."/>
            <person name="Lykidis A."/>
            <person name="Trong S."/>
            <person name="Nolan M."/>
            <person name="Goltsman E."/>
            <person name="Thiel J."/>
            <person name="Malfatti S."/>
            <person name="Loper J.E."/>
            <person name="Lapidus A."/>
            <person name="Detter J.C."/>
            <person name="Land M."/>
            <person name="Richardson P.M."/>
            <person name="Kyrpides N.C."/>
            <person name="Ivanova N."/>
            <person name="Lindow S.E."/>
        </authorList>
    </citation>
    <scope>NUCLEOTIDE SEQUENCE [LARGE SCALE GENOMIC DNA]</scope>
    <source>
        <strain>B728a</strain>
    </source>
</reference>
<dbReference type="EMBL" id="AF095845">
    <property type="protein sequence ID" value="AAC98298.1"/>
    <property type="molecule type" value="Genomic_DNA"/>
</dbReference>
<dbReference type="EMBL" id="CP000075">
    <property type="protein sequence ID" value="AAY38211.1"/>
    <property type="molecule type" value="Genomic_DNA"/>
</dbReference>
<dbReference type="RefSeq" id="WP_003405080.1">
    <property type="nucleotide sequence ID" value="NC_007005.1"/>
</dbReference>
<dbReference type="RefSeq" id="YP_236249.1">
    <property type="nucleotide sequence ID" value="NC_007005.1"/>
</dbReference>
<dbReference type="SMR" id="Q9Z3U1"/>
<dbReference type="STRING" id="205918.Psyr_3179"/>
<dbReference type="KEGG" id="psb:Psyr_3179"/>
<dbReference type="PATRIC" id="fig|205918.7.peg.3244"/>
<dbReference type="eggNOG" id="COG1674">
    <property type="taxonomic scope" value="Bacteria"/>
</dbReference>
<dbReference type="HOGENOM" id="CLU_001981_9_7_6"/>
<dbReference type="OrthoDB" id="9807790at2"/>
<dbReference type="Proteomes" id="UP000000426">
    <property type="component" value="Chromosome"/>
</dbReference>
<dbReference type="GO" id="GO:0005886">
    <property type="term" value="C:plasma membrane"/>
    <property type="evidence" value="ECO:0007669"/>
    <property type="project" value="UniProtKB-SubCell"/>
</dbReference>
<dbReference type="GO" id="GO:0005524">
    <property type="term" value="F:ATP binding"/>
    <property type="evidence" value="ECO:0007669"/>
    <property type="project" value="UniProtKB-KW"/>
</dbReference>
<dbReference type="GO" id="GO:0003677">
    <property type="term" value="F:DNA binding"/>
    <property type="evidence" value="ECO:0007669"/>
    <property type="project" value="UniProtKB-KW"/>
</dbReference>
<dbReference type="GO" id="GO:0051301">
    <property type="term" value="P:cell division"/>
    <property type="evidence" value="ECO:0007669"/>
    <property type="project" value="UniProtKB-KW"/>
</dbReference>
<dbReference type="GO" id="GO:0007059">
    <property type="term" value="P:chromosome segregation"/>
    <property type="evidence" value="ECO:0007669"/>
    <property type="project" value="UniProtKB-KW"/>
</dbReference>
<dbReference type="CDD" id="cd01127">
    <property type="entry name" value="TrwB_TraG_TraD_VirD4"/>
    <property type="match status" value="1"/>
</dbReference>
<dbReference type="FunFam" id="3.40.50.300:FF:000209">
    <property type="entry name" value="Cell division protein FtsK"/>
    <property type="match status" value="1"/>
</dbReference>
<dbReference type="FunFam" id="1.10.10.10:FF:000268">
    <property type="entry name" value="DNA translocase FtsK"/>
    <property type="match status" value="1"/>
</dbReference>
<dbReference type="FunFam" id="3.30.980.40:FF:000001">
    <property type="entry name" value="DNA translocase FtsK"/>
    <property type="match status" value="1"/>
</dbReference>
<dbReference type="Gene3D" id="3.30.980.40">
    <property type="match status" value="1"/>
</dbReference>
<dbReference type="Gene3D" id="3.40.50.300">
    <property type="entry name" value="P-loop containing nucleotide triphosphate hydrolases"/>
    <property type="match status" value="1"/>
</dbReference>
<dbReference type="Gene3D" id="1.10.10.10">
    <property type="entry name" value="Winged helix-like DNA-binding domain superfamily/Winged helix DNA-binding domain"/>
    <property type="match status" value="1"/>
</dbReference>
<dbReference type="InterPro" id="IPR050206">
    <property type="entry name" value="FtsK/SpoIIIE/SftA"/>
</dbReference>
<dbReference type="InterPro" id="IPR025199">
    <property type="entry name" value="FtsK_4TM"/>
</dbReference>
<dbReference type="InterPro" id="IPR041027">
    <property type="entry name" value="FtsK_alpha"/>
</dbReference>
<dbReference type="InterPro" id="IPR002543">
    <property type="entry name" value="FtsK_dom"/>
</dbReference>
<dbReference type="InterPro" id="IPR018541">
    <property type="entry name" value="Ftsk_gamma"/>
</dbReference>
<dbReference type="InterPro" id="IPR027417">
    <property type="entry name" value="P-loop_NTPase"/>
</dbReference>
<dbReference type="InterPro" id="IPR036388">
    <property type="entry name" value="WH-like_DNA-bd_sf"/>
</dbReference>
<dbReference type="InterPro" id="IPR036390">
    <property type="entry name" value="WH_DNA-bd_sf"/>
</dbReference>
<dbReference type="PANTHER" id="PTHR22683:SF41">
    <property type="entry name" value="DNA TRANSLOCASE FTSK"/>
    <property type="match status" value="1"/>
</dbReference>
<dbReference type="PANTHER" id="PTHR22683">
    <property type="entry name" value="SPORULATION PROTEIN RELATED"/>
    <property type="match status" value="1"/>
</dbReference>
<dbReference type="Pfam" id="PF13491">
    <property type="entry name" value="FtsK_4TM"/>
    <property type="match status" value="1"/>
</dbReference>
<dbReference type="Pfam" id="PF17854">
    <property type="entry name" value="FtsK_alpha"/>
    <property type="match status" value="1"/>
</dbReference>
<dbReference type="Pfam" id="PF09397">
    <property type="entry name" value="FtsK_gamma"/>
    <property type="match status" value="1"/>
</dbReference>
<dbReference type="Pfam" id="PF01580">
    <property type="entry name" value="FtsK_SpoIIIE"/>
    <property type="match status" value="1"/>
</dbReference>
<dbReference type="SMART" id="SM00843">
    <property type="entry name" value="Ftsk_gamma"/>
    <property type="match status" value="1"/>
</dbReference>
<dbReference type="SUPFAM" id="SSF52540">
    <property type="entry name" value="P-loop containing nucleoside triphosphate hydrolases"/>
    <property type="match status" value="1"/>
</dbReference>
<dbReference type="SUPFAM" id="SSF46785">
    <property type="entry name" value="Winged helix' DNA-binding domain"/>
    <property type="match status" value="1"/>
</dbReference>
<dbReference type="PROSITE" id="PS50901">
    <property type="entry name" value="FTSK"/>
    <property type="match status" value="1"/>
</dbReference>
<keyword id="KW-0067">ATP-binding</keyword>
<keyword id="KW-0131">Cell cycle</keyword>
<keyword id="KW-0132">Cell division</keyword>
<keyword id="KW-0997">Cell inner membrane</keyword>
<keyword id="KW-1003">Cell membrane</keyword>
<keyword id="KW-0159">Chromosome partition</keyword>
<keyword id="KW-0238">DNA-binding</keyword>
<keyword id="KW-0472">Membrane</keyword>
<keyword id="KW-0547">Nucleotide-binding</keyword>
<keyword id="KW-0812">Transmembrane</keyword>
<keyword id="KW-1133">Transmembrane helix</keyword>
<accession>Q9Z3U1</accession>
<accession>Q4ZRL1</accession>
<comment type="function">
    <text evidence="1">Essential cell division protein that coordinates cell division and chromosome segregation. The N-terminus is involved in assembly of the cell-division machinery. The C-terminus functions as a DNA motor that moves dsDNA in an ATP-dependent manner towards the dif recombination site, which is located within the replication terminus region. Translocation stops specifically at Xer-dif sites, where FtsK interacts with the Xer recombinase, allowing activation of chromosome unlinking by recombination. FtsK orienting polar sequences (KOPS) guide the direction of DNA translocation. FtsK can remove proteins from DNA as it translocates, but translocation stops specifically at XerCD-dif site, thereby preventing removal of XerC and XerD from dif (By similarity).</text>
</comment>
<comment type="subunit">
    <text evidence="1">Homohexamer. Forms a ring that surrounds DNA (By similarity).</text>
</comment>
<comment type="subcellular location">
    <subcellularLocation>
        <location evidence="1">Cell inner membrane</location>
        <topology evidence="1">Multi-pass membrane protein</topology>
    </subcellularLocation>
    <text evidence="1">Located at the septum.</text>
</comment>
<comment type="domain">
    <text evidence="1">Consists of an N-terminal domain, which is sufficient for the localization to the septal ring and is required for cell division, followed by a linker domain, and a C-terminal domain, which forms the translocation motor involved in chromosome segregation. The C-terminal domain can be further subdivided into alpha, beta and gamma subdomains. The alpha and beta subdomains multimerise to produce a hexameric ring, contain the nucleotide binding motif and form the DNA pump. The gamma subdomain is a regulatory subdomain that controls translocation of DNA by recognition of KOPS motifs and interacts with XerD recombinase (By similarity).</text>
</comment>
<comment type="similarity">
    <text evidence="5">Belongs to the FtsK/SpoIIIE/SftA family.</text>
</comment>
<evidence type="ECO:0000250" key="1"/>
<evidence type="ECO:0000255" key="2"/>
<evidence type="ECO:0000255" key="3">
    <source>
        <dbReference type="PROSITE-ProRule" id="PRU00289"/>
    </source>
</evidence>
<evidence type="ECO:0000256" key="4">
    <source>
        <dbReference type="SAM" id="MobiDB-lite"/>
    </source>
</evidence>
<evidence type="ECO:0000305" key="5"/>
<gene>
    <name type="primary">ftsK</name>
    <name type="ordered locus">Psyr_3179</name>
</gene>
<feature type="chain" id="PRO_0000098281" description="DNA translocase FtsK">
    <location>
        <begin position="1"/>
        <end position="801"/>
    </location>
</feature>
<feature type="transmembrane region" description="Helical" evidence="2">
    <location>
        <begin position="24"/>
        <end position="44"/>
    </location>
</feature>
<feature type="transmembrane region" description="Helical" evidence="2">
    <location>
        <begin position="73"/>
        <end position="93"/>
    </location>
</feature>
<feature type="transmembrane region" description="Helical" evidence="2">
    <location>
        <begin position="117"/>
        <end position="137"/>
    </location>
</feature>
<feature type="transmembrane region" description="Helical" evidence="2">
    <location>
        <begin position="167"/>
        <end position="187"/>
    </location>
</feature>
<feature type="topological domain" description="Cytoplasmic" evidence="2">
    <location>
        <begin position="188"/>
        <end position="801"/>
    </location>
</feature>
<feature type="domain" description="FtsK" evidence="3">
    <location>
        <begin position="441"/>
        <end position="653"/>
    </location>
</feature>
<feature type="region of interest" description="Disordered" evidence="4">
    <location>
        <begin position="715"/>
        <end position="736"/>
    </location>
</feature>
<feature type="binding site" evidence="3">
    <location>
        <begin position="461"/>
        <end position="466"/>
    </location>
    <ligand>
        <name>ATP</name>
        <dbReference type="ChEBI" id="CHEBI:30616"/>
    </ligand>
</feature>
<name>FTSK_PSEU2</name>
<protein>
    <recommendedName>
        <fullName>DNA translocase FtsK</fullName>
    </recommendedName>
</protein>
<sequence>MKKSTPAPSAVPLWRQQLHYRLKEGALIAFGALCLYLMMALLTYDQSDPGWSHTSSNAAQVQNAAGRAGAFCADILFMILGYFAYIFPLLLAIKAWQVFRHRHEPWQWSGWLFSWRLIGLVFLILAGAALAHIHFHFSAGFPGSAGGVLGEVLGDLAKKALNIQGSTLLFIALFLFGLTVFTDLSWFKVMDVTGKITLDLFELFQGAANRWWTARAERKQMVAQLREVDMRVNDVVAPVAPDRREQAKARERLVEREASLSKHMTEREKHVPAVIAPAPSKPVEPSKRVMKEKQAPLFVDSAVEGTLPPISILDPAEKKQLNYSPESLAAVGHLLEIKLKEFGVEVSVDSIHPGPVITRYEIQPAAGVKVSRISNLAKDLARSLAVTSVRVVEVIPGKTTVGIEIPNEDRQIVRFSEVLSTPEYDNAKSPVTLALGHDIGGKPVITDLAKMPHLLVAGTTGSGKSVGVNAMILSILFKSGPEDAKLIMIDPKMLELSIYEGIPHLLCPVVTDMKDAANALRWSVAEMERRYKLMAKMGVRNLSGFNQKVKEAQDAGEPLADPLYKRESIHDEAPLLSKLPTIVVVVDEFADMMMIVGKKVEELIARIAQKARAAGIHLILATQRPSVDVITGLIKANIPTRMAFQVSSKIDSRTIIDQGGAEQLLGHGDMLYMPPGTSLPIRVHGAFVSDEEVHRVVEAWKLRGSPDYNDDILAGVEEPGSGFDGGSGEGSEDSESDALYDEAVKFVLESRRASISAVQRKLKIGYNRAARMIEAMEMAGVVTSMNTNGSREVLAPGPVRD</sequence>
<proteinExistence type="inferred from homology"/>